<organism>
    <name type="scientific">Prochlorococcus marinus (strain MIT 9211)</name>
    <dbReference type="NCBI Taxonomy" id="93059"/>
    <lineage>
        <taxon>Bacteria</taxon>
        <taxon>Bacillati</taxon>
        <taxon>Cyanobacteriota</taxon>
        <taxon>Cyanophyceae</taxon>
        <taxon>Synechococcales</taxon>
        <taxon>Prochlorococcaceae</taxon>
        <taxon>Prochlorococcus</taxon>
    </lineage>
</organism>
<feature type="chain" id="PRO_1000095466" description="ATP phosphoribosyltransferase regulatory subunit">
    <location>
        <begin position="1"/>
        <end position="392"/>
    </location>
</feature>
<protein>
    <recommendedName>
        <fullName evidence="1">ATP phosphoribosyltransferase regulatory subunit</fullName>
    </recommendedName>
</protein>
<dbReference type="EMBL" id="CP000878">
    <property type="protein sequence ID" value="ABX08792.1"/>
    <property type="molecule type" value="Genomic_DNA"/>
</dbReference>
<dbReference type="RefSeq" id="WP_012195414.1">
    <property type="nucleotide sequence ID" value="NC_009976.1"/>
</dbReference>
<dbReference type="SMR" id="A9BAD0"/>
<dbReference type="STRING" id="93059.P9211_08611"/>
<dbReference type="KEGG" id="pmj:P9211_08611"/>
<dbReference type="eggNOG" id="COG3705">
    <property type="taxonomic scope" value="Bacteria"/>
</dbReference>
<dbReference type="HOGENOM" id="CLU_025113_0_2_3"/>
<dbReference type="OrthoDB" id="9800814at2"/>
<dbReference type="UniPathway" id="UPA00031">
    <property type="reaction ID" value="UER00006"/>
</dbReference>
<dbReference type="Proteomes" id="UP000000788">
    <property type="component" value="Chromosome"/>
</dbReference>
<dbReference type="GO" id="GO:0005737">
    <property type="term" value="C:cytoplasm"/>
    <property type="evidence" value="ECO:0007669"/>
    <property type="project" value="UniProtKB-SubCell"/>
</dbReference>
<dbReference type="GO" id="GO:0004821">
    <property type="term" value="F:histidine-tRNA ligase activity"/>
    <property type="evidence" value="ECO:0007669"/>
    <property type="project" value="TreeGrafter"/>
</dbReference>
<dbReference type="GO" id="GO:0006427">
    <property type="term" value="P:histidyl-tRNA aminoacylation"/>
    <property type="evidence" value="ECO:0007669"/>
    <property type="project" value="TreeGrafter"/>
</dbReference>
<dbReference type="GO" id="GO:0000105">
    <property type="term" value="P:L-histidine biosynthetic process"/>
    <property type="evidence" value="ECO:0007669"/>
    <property type="project" value="UniProtKB-UniRule"/>
</dbReference>
<dbReference type="Gene3D" id="3.30.930.10">
    <property type="entry name" value="Bira Bifunctional Protein, Domain 2"/>
    <property type="match status" value="1"/>
</dbReference>
<dbReference type="HAMAP" id="MF_00125">
    <property type="entry name" value="HisZ"/>
    <property type="match status" value="1"/>
</dbReference>
<dbReference type="InterPro" id="IPR045864">
    <property type="entry name" value="aa-tRNA-synth_II/BPL/LPL"/>
</dbReference>
<dbReference type="InterPro" id="IPR041715">
    <property type="entry name" value="HisRS-like_core"/>
</dbReference>
<dbReference type="InterPro" id="IPR004516">
    <property type="entry name" value="HisRS/HisZ"/>
</dbReference>
<dbReference type="InterPro" id="IPR004517">
    <property type="entry name" value="HisZ"/>
</dbReference>
<dbReference type="NCBIfam" id="NF008939">
    <property type="entry name" value="PRK12292.2-1"/>
    <property type="match status" value="1"/>
</dbReference>
<dbReference type="PANTHER" id="PTHR43707:SF1">
    <property type="entry name" value="HISTIDINE--TRNA LIGASE, MITOCHONDRIAL-RELATED"/>
    <property type="match status" value="1"/>
</dbReference>
<dbReference type="PANTHER" id="PTHR43707">
    <property type="entry name" value="HISTIDYL-TRNA SYNTHETASE"/>
    <property type="match status" value="1"/>
</dbReference>
<dbReference type="Pfam" id="PF13393">
    <property type="entry name" value="tRNA-synt_His"/>
    <property type="match status" value="1"/>
</dbReference>
<dbReference type="PIRSF" id="PIRSF001549">
    <property type="entry name" value="His-tRNA_synth"/>
    <property type="match status" value="1"/>
</dbReference>
<dbReference type="SUPFAM" id="SSF55681">
    <property type="entry name" value="Class II aaRS and biotin synthetases"/>
    <property type="match status" value="1"/>
</dbReference>
<accession>A9BAD0</accession>
<name>HISZ_PROM4</name>
<keyword id="KW-0028">Amino-acid biosynthesis</keyword>
<keyword id="KW-0963">Cytoplasm</keyword>
<keyword id="KW-0368">Histidine biosynthesis</keyword>
<keyword id="KW-1185">Reference proteome</keyword>
<proteinExistence type="inferred from homology"/>
<sequence>MAKQSTLGSKELNPRQVEENNLLATKLSEIYKKWGYQEVAPPQVEGLKTLMAGGGIDSKEILKLVIDEPVGLRPEMTASIARAASTRYVAEPRPLRLWASGTIFKSREESDGKIVIDESLQSGVELFGIEGMEIEVELLYLLIESLKKLNIDESSMPILLINHISLMELIISKFSKSSKEKVTDILSNFDLIEIEKLELDFDERNTLKLLQELRGSPRNVIKTLESLYGNNKILDSLTKIFNIIEPISNKYNIQLQLDPTFKPHYELYTGIVFELVCNTRETPVVIARGGRYDELVKMFNENPEDEIAAGFSYSIDKIRELNTRLETFDTNPERILVAYGPNKTIKDAIECQAKLHEKGYVAIIELNSCINEDHAMKLVNQRKCTKLKWINS</sequence>
<comment type="function">
    <text evidence="1">Required for the first step of histidine biosynthesis. May allow the feedback regulation of ATP phosphoribosyltransferase activity by histidine.</text>
</comment>
<comment type="pathway">
    <text evidence="1">Amino-acid biosynthesis; L-histidine biosynthesis; L-histidine from 5-phospho-alpha-D-ribose 1-diphosphate: step 1/9.</text>
</comment>
<comment type="subunit">
    <text evidence="1">Heteromultimer composed of HisG and HisZ subunits.</text>
</comment>
<comment type="subcellular location">
    <subcellularLocation>
        <location evidence="1">Cytoplasm</location>
    </subcellularLocation>
</comment>
<comment type="miscellaneous">
    <text>This function is generally fulfilled by the C-terminal part of HisG, which is missing in some bacteria such as this one.</text>
</comment>
<comment type="similarity">
    <text evidence="1">Belongs to the class-II aminoacyl-tRNA synthetase family. HisZ subfamily.</text>
</comment>
<evidence type="ECO:0000255" key="1">
    <source>
        <dbReference type="HAMAP-Rule" id="MF_00125"/>
    </source>
</evidence>
<reference key="1">
    <citation type="journal article" date="2007" name="PLoS Genet.">
        <title>Patterns and implications of gene gain and loss in the evolution of Prochlorococcus.</title>
        <authorList>
            <person name="Kettler G.C."/>
            <person name="Martiny A.C."/>
            <person name="Huang K."/>
            <person name="Zucker J."/>
            <person name="Coleman M.L."/>
            <person name="Rodrigue S."/>
            <person name="Chen F."/>
            <person name="Lapidus A."/>
            <person name="Ferriera S."/>
            <person name="Johnson J."/>
            <person name="Steglich C."/>
            <person name="Church G.M."/>
            <person name="Richardson P."/>
            <person name="Chisholm S.W."/>
        </authorList>
    </citation>
    <scope>NUCLEOTIDE SEQUENCE [LARGE SCALE GENOMIC DNA]</scope>
    <source>
        <strain>MIT 9211</strain>
    </source>
</reference>
<gene>
    <name evidence="1" type="primary">hisZ</name>
    <name type="ordered locus">P9211_08611</name>
</gene>